<proteinExistence type="evidence at protein level"/>
<protein>
    <recommendedName>
        <fullName>Sterol 3-beta-glucosyltransferase UGT80A2</fullName>
        <ecNumber>2.4.1.173</ecNumber>
    </recommendedName>
    <alternativeName>
        <fullName>UDP-glucose:sterol glucosyltransferase 80A2</fullName>
    </alternativeName>
</protein>
<keyword id="KW-0025">Alternative splicing</keyword>
<keyword id="KW-0328">Glycosyltransferase</keyword>
<keyword id="KW-0444">Lipid biosynthesis</keyword>
<keyword id="KW-0443">Lipid metabolism</keyword>
<keyword id="KW-1185">Reference proteome</keyword>
<keyword id="KW-0752">Steroid biosynthesis</keyword>
<keyword id="KW-0753">Steroid metabolism</keyword>
<keyword id="KW-0756">Sterol biosynthesis</keyword>
<keyword id="KW-1207">Sterol metabolism</keyword>
<keyword id="KW-0808">Transferase</keyword>
<sequence length="637" mass="69277">MPEISPAELAKVSSSSSSSSSSSSGRASVKIEEIEGGAAASGVVIVSEELETNPKTVVASIADETVAESSGTGNKSFSRVWTMPLEGSSSSDKAESSSTNQPRLDKSKTERQQKVTHILAEDAAKIFDDKISAGKKLKLLNRIATVKHDGTVEFEVPADAIPQPIVVDRGESKNGVCADESIDGVDLQYIPPMQIVMLIVGTRGDVQPFVAIAKRLQDYGHRVRLATHANFKEFVLTAGLEFYPLGGDPKVLAGYMVKNKGFLPSGPSEIPIQRNQMKDIIYSLLPACKEPDPDSGISFKADAIIANPPAYGHTHVAEALKIPIHVFFTMPWTPTSEFPHPLSRVKQPAGYRLSYQIVDSLIWLGIRDMVNDLRKKKLKLRPVTYLSGTQGSGSNIPHGYMWSPHLVPKPKDWGPQIDVVGFCYLDLASNYEPPAELVEWLEAGDKPIYIGFGSLPVQEPEKMTEIIVEALQRTKQRGIINKGWGGLGNLKEPKDFVYLLDNVPHDWLFPRCKAVVHHGGAGTTAAGLKASCPTTIVPFFGDQPFWGERVHARGVGPSPIPVDEFSLHKLEDAINFMLDDKVKSSAETLAKAMKDEDGVAGAVKAFFKHLPSAKQNISDPIPEPSGFLSFRKCFGCS</sequence>
<organism>
    <name type="scientific">Arabidopsis thaliana</name>
    <name type="common">Mouse-ear cress</name>
    <dbReference type="NCBI Taxonomy" id="3702"/>
    <lineage>
        <taxon>Eukaryota</taxon>
        <taxon>Viridiplantae</taxon>
        <taxon>Streptophyta</taxon>
        <taxon>Embryophyta</taxon>
        <taxon>Tracheophyta</taxon>
        <taxon>Spermatophyta</taxon>
        <taxon>Magnoliopsida</taxon>
        <taxon>eudicotyledons</taxon>
        <taxon>Gunneridae</taxon>
        <taxon>Pentapetalae</taxon>
        <taxon>rosids</taxon>
        <taxon>malvids</taxon>
        <taxon>Brassicales</taxon>
        <taxon>Brassicaceae</taxon>
        <taxon>Camelineae</taxon>
        <taxon>Arabidopsis</taxon>
    </lineage>
</organism>
<comment type="function">
    <text evidence="3 4">Involved in the biosynthesis of sterol glucosides. Catalyzes the synthesis of steryl glycosides (SGs) and acyl steryl glycosides (ASGs) which are the most abundant sterol derivatives in higher plants. Can act on several sterols like sitosterol, campesterol and stigmasterol. Both UGT80A2 and UGT80B1 are required for the normal production of SGs and ASGs in seeds.</text>
</comment>
<comment type="catalytic activity">
    <reaction>
        <text>a sterol + UDP-alpha-D-glucose = a sterol 3-beta-D-glucoside + UDP + H(+)</text>
        <dbReference type="Rhea" id="RHEA:22724"/>
        <dbReference type="ChEBI" id="CHEBI:15378"/>
        <dbReference type="ChEBI" id="CHEBI:15889"/>
        <dbReference type="ChEBI" id="CHEBI:37424"/>
        <dbReference type="ChEBI" id="CHEBI:58223"/>
        <dbReference type="ChEBI" id="CHEBI:58885"/>
        <dbReference type="EC" id="2.4.1.173"/>
    </reaction>
</comment>
<comment type="alternative products">
    <event type="alternative splicing"/>
    <isoform>
        <id>Q9M8Z7-1</id>
        <name>1</name>
        <sequence type="displayed"/>
    </isoform>
    <isoform>
        <id>Q9M8Z7-2</id>
        <name>2</name>
        <sequence type="described" ref="VSP_046337"/>
    </isoform>
</comment>
<comment type="tissue specificity">
    <text evidence="2 3">Expressed in roots, cauline leaf epidermal cells, stomata, stamen, pollen and around the base of siliques.</text>
</comment>
<comment type="disruption phenotype">
    <text evidence="3">Reduced growth rates.</text>
</comment>
<comment type="similarity">
    <text evidence="6">Belongs to the glycosyltransferase 28 family.</text>
</comment>
<comment type="sequence caution" evidence="6">
    <conflict type="erroneous initiation">
        <sequence resource="EMBL-CDS" id="AAL09737"/>
    </conflict>
    <text>Truncated N-terminus.</text>
</comment>
<accession>Q9M8Z7</accession>
<accession>B9DFL3</accession>
<accession>O23649</accession>
<accession>Q93ZJ2</accession>
<feature type="chain" id="PRO_0000422074" description="Sterol 3-beta-glucosyltransferase UGT80A2">
    <location>
        <begin position="1"/>
        <end position="637"/>
    </location>
</feature>
<feature type="region of interest" description="Disordered" evidence="1">
    <location>
        <begin position="1"/>
        <end position="29"/>
    </location>
</feature>
<feature type="region of interest" description="Disordered" evidence="1">
    <location>
        <begin position="66"/>
        <end position="112"/>
    </location>
</feature>
<feature type="compositionally biased region" description="Low complexity" evidence="1">
    <location>
        <begin position="13"/>
        <end position="24"/>
    </location>
</feature>
<feature type="compositionally biased region" description="Polar residues" evidence="1">
    <location>
        <begin position="67"/>
        <end position="79"/>
    </location>
</feature>
<feature type="compositionally biased region" description="Basic and acidic residues" evidence="1">
    <location>
        <begin position="103"/>
        <end position="112"/>
    </location>
</feature>
<feature type="splice variant" id="VSP_046337" description="In isoform 2." evidence="5">
    <original>C</original>
    <variation>F</variation>
    <location>
        <position position="636"/>
    </location>
</feature>
<feature type="sequence conflict" description="In Ref. 1; CAB06082." evidence="6" ref="1">
    <original>K</original>
    <variation>R</variation>
    <location>
        <position position="93"/>
    </location>
</feature>
<dbReference type="EC" id="2.4.1.173"/>
<dbReference type="EMBL" id="Z83833">
    <property type="protein sequence ID" value="CAB06082.1"/>
    <property type="molecule type" value="mRNA"/>
</dbReference>
<dbReference type="EMBL" id="AC016827">
    <property type="protein sequence ID" value="AAF27006.1"/>
    <property type="molecule type" value="Genomic_DNA"/>
</dbReference>
<dbReference type="EMBL" id="CP002686">
    <property type="protein sequence ID" value="AEE74489.1"/>
    <property type="molecule type" value="Genomic_DNA"/>
</dbReference>
<dbReference type="EMBL" id="CP002686">
    <property type="protein sequence ID" value="AEE74490.1"/>
    <property type="molecule type" value="Genomic_DNA"/>
</dbReference>
<dbReference type="EMBL" id="AY057496">
    <property type="protein sequence ID" value="AAL09737.1"/>
    <property type="status" value="ALT_INIT"/>
    <property type="molecule type" value="mRNA"/>
</dbReference>
<dbReference type="EMBL" id="AY079032">
    <property type="protein sequence ID" value="AAL79582.1"/>
    <property type="molecule type" value="mRNA"/>
</dbReference>
<dbReference type="EMBL" id="AK316817">
    <property type="protein sequence ID" value="BAH19530.1"/>
    <property type="molecule type" value="mRNA"/>
</dbReference>
<dbReference type="RefSeq" id="NP_566297.2">
    <molecule id="Q9M8Z7-1"/>
    <property type="nucleotide sequence ID" value="NM_111582.3"/>
</dbReference>
<dbReference type="RefSeq" id="NP_850529.1">
    <molecule id="Q9M8Z7-2"/>
    <property type="nucleotide sequence ID" value="NM_180198.3"/>
</dbReference>
<dbReference type="SMR" id="Q9M8Z7"/>
<dbReference type="BioGRID" id="5222">
    <property type="interactions" value="1"/>
</dbReference>
<dbReference type="FunCoup" id="Q9M8Z7">
    <property type="interactions" value="1594"/>
</dbReference>
<dbReference type="STRING" id="3702.Q9M8Z7"/>
<dbReference type="CAZy" id="GT1">
    <property type="family name" value="Glycosyltransferase Family 1"/>
</dbReference>
<dbReference type="iPTMnet" id="Q9M8Z7"/>
<dbReference type="SwissPalm" id="Q9M8Z7"/>
<dbReference type="PaxDb" id="3702-AT3G07020.2"/>
<dbReference type="ProteomicsDB" id="242610">
    <molecule id="Q9M8Z7-1"/>
</dbReference>
<dbReference type="EnsemblPlants" id="AT3G07020.1">
    <molecule id="Q9M8Z7-2"/>
    <property type="protein sequence ID" value="AT3G07020.1"/>
    <property type="gene ID" value="AT3G07020"/>
</dbReference>
<dbReference type="EnsemblPlants" id="AT3G07020.2">
    <molecule id="Q9M8Z7-1"/>
    <property type="protein sequence ID" value="AT3G07020.2"/>
    <property type="gene ID" value="AT3G07020"/>
</dbReference>
<dbReference type="GeneID" id="819887"/>
<dbReference type="Gramene" id="AT3G07020.1">
    <molecule id="Q9M8Z7-2"/>
    <property type="protein sequence ID" value="AT3G07020.1"/>
    <property type="gene ID" value="AT3G07020"/>
</dbReference>
<dbReference type="Gramene" id="AT3G07020.2">
    <molecule id="Q9M8Z7-1"/>
    <property type="protein sequence ID" value="AT3G07020.2"/>
    <property type="gene ID" value="AT3G07020"/>
</dbReference>
<dbReference type="KEGG" id="ath:AT3G07020"/>
<dbReference type="Araport" id="AT3G07020"/>
<dbReference type="TAIR" id="AT3G07020">
    <property type="gene designation" value="SGT"/>
</dbReference>
<dbReference type="eggNOG" id="KOG1192">
    <property type="taxonomic scope" value="Eukaryota"/>
</dbReference>
<dbReference type="HOGENOM" id="CLU_000537_8_3_1"/>
<dbReference type="InParanoid" id="Q9M8Z7"/>
<dbReference type="PhylomeDB" id="Q9M8Z7"/>
<dbReference type="BioCyc" id="ARA:AT3G07020-MONOMER"/>
<dbReference type="BioCyc" id="MetaCyc:AT3G07020-MONOMER"/>
<dbReference type="BRENDA" id="2.4.1.173">
    <property type="organism ID" value="399"/>
</dbReference>
<dbReference type="PRO" id="PR:Q9M8Z7"/>
<dbReference type="Proteomes" id="UP000006548">
    <property type="component" value="Chromosome 3"/>
</dbReference>
<dbReference type="ExpressionAtlas" id="Q9M8Z7">
    <property type="expression patterns" value="baseline and differential"/>
</dbReference>
<dbReference type="GO" id="GO:0005829">
    <property type="term" value="C:cytosol"/>
    <property type="evidence" value="ECO:0007005"/>
    <property type="project" value="TAIR"/>
</dbReference>
<dbReference type="GO" id="GO:0005886">
    <property type="term" value="C:plasma membrane"/>
    <property type="evidence" value="ECO:0007005"/>
    <property type="project" value="TAIR"/>
</dbReference>
<dbReference type="GO" id="GO:0016906">
    <property type="term" value="F:sterol 3-beta-glucosyltransferase activity"/>
    <property type="evidence" value="ECO:0000314"/>
    <property type="project" value="TAIR"/>
</dbReference>
<dbReference type="GO" id="GO:0005975">
    <property type="term" value="P:carbohydrate metabolic process"/>
    <property type="evidence" value="ECO:0007669"/>
    <property type="project" value="InterPro"/>
</dbReference>
<dbReference type="GO" id="GO:0030259">
    <property type="term" value="P:lipid glycosylation"/>
    <property type="evidence" value="ECO:0007669"/>
    <property type="project" value="InterPro"/>
</dbReference>
<dbReference type="GO" id="GO:0048316">
    <property type="term" value="P:seed development"/>
    <property type="evidence" value="ECO:0000315"/>
    <property type="project" value="TAIR"/>
</dbReference>
<dbReference type="GO" id="GO:0016126">
    <property type="term" value="P:sterol biosynthetic process"/>
    <property type="evidence" value="ECO:0007669"/>
    <property type="project" value="UniProtKB-KW"/>
</dbReference>
<dbReference type="GO" id="GO:0016125">
    <property type="term" value="P:sterol metabolic process"/>
    <property type="evidence" value="ECO:0000315"/>
    <property type="project" value="TAIR"/>
</dbReference>
<dbReference type="CDD" id="cd03784">
    <property type="entry name" value="GT1_Gtf-like"/>
    <property type="match status" value="1"/>
</dbReference>
<dbReference type="FunFam" id="3.40.50.2000:FF:000009">
    <property type="entry name" value="Sterol 3-beta-glucosyltransferase UGT80A2"/>
    <property type="match status" value="1"/>
</dbReference>
<dbReference type="FunFam" id="3.40.50.2000:FF:000030">
    <property type="entry name" value="Sterol 3-beta-glucosyltransferase UGT80A2"/>
    <property type="match status" value="1"/>
</dbReference>
<dbReference type="Gene3D" id="3.40.50.2000">
    <property type="entry name" value="Glycogen Phosphorylase B"/>
    <property type="match status" value="2"/>
</dbReference>
<dbReference type="InterPro" id="IPR010610">
    <property type="entry name" value="EryCIII-like_C"/>
</dbReference>
<dbReference type="InterPro" id="IPR050426">
    <property type="entry name" value="Glycosyltransferase_28"/>
</dbReference>
<dbReference type="InterPro" id="IPR004276">
    <property type="entry name" value="GlycoTrans_28_N"/>
</dbReference>
<dbReference type="InterPro" id="IPR002213">
    <property type="entry name" value="UDP_glucos_trans"/>
</dbReference>
<dbReference type="PANTHER" id="PTHR48050">
    <property type="entry name" value="STEROL 3-BETA-GLUCOSYLTRANSFERASE"/>
    <property type="match status" value="1"/>
</dbReference>
<dbReference type="PANTHER" id="PTHR48050:SF13">
    <property type="entry name" value="STEROL 3-BETA-GLUCOSYLTRANSFERASE UGT80A2"/>
    <property type="match status" value="1"/>
</dbReference>
<dbReference type="Pfam" id="PF06722">
    <property type="entry name" value="EryCIII-like_C"/>
    <property type="match status" value="1"/>
</dbReference>
<dbReference type="Pfam" id="PF03033">
    <property type="entry name" value="Glyco_transf_28"/>
    <property type="match status" value="1"/>
</dbReference>
<dbReference type="SUPFAM" id="SSF53756">
    <property type="entry name" value="UDP-Glycosyltransferase/glycogen phosphorylase"/>
    <property type="match status" value="1"/>
</dbReference>
<gene>
    <name type="primary">UGT80A2</name>
    <name type="ordered locus">At3g07020</name>
    <name type="ORF">F17A9.17</name>
</gene>
<evidence type="ECO:0000256" key="1">
    <source>
        <dbReference type="SAM" id="MobiDB-lite"/>
    </source>
</evidence>
<evidence type="ECO:0000269" key="2">
    <source>
    </source>
</evidence>
<evidence type="ECO:0000269" key="3">
    <source>
    </source>
</evidence>
<evidence type="ECO:0000269" key="4">
    <source>
    </source>
</evidence>
<evidence type="ECO:0000303" key="5">
    <source>
    </source>
</evidence>
<evidence type="ECO:0000305" key="6"/>
<reference key="1">
    <citation type="journal article" date="1997" name="Plant Mol. Biol.">
        <title>UDP-glucose:sterol glucosyltransferase: cloning and functional expression in Escherichia coli.</title>
        <authorList>
            <person name="Warnecke D.C."/>
            <person name="Baltrusch M."/>
            <person name="Buck F."/>
            <person name="Wolter F.P."/>
            <person name="Heinz E."/>
        </authorList>
    </citation>
    <scope>NUCLEOTIDE SEQUENCE [MRNA] (ISOFORM 1)</scope>
    <source>
        <strain>cv. Columbia</strain>
    </source>
</reference>
<reference key="2">
    <citation type="journal article" date="2000" name="Nature">
        <title>Sequence and analysis of chromosome 3 of the plant Arabidopsis thaliana.</title>
        <authorList>
            <person name="Salanoubat M."/>
            <person name="Lemcke K."/>
            <person name="Rieger M."/>
            <person name="Ansorge W."/>
            <person name="Unseld M."/>
            <person name="Fartmann B."/>
            <person name="Valle G."/>
            <person name="Bloecker H."/>
            <person name="Perez-Alonso M."/>
            <person name="Obermaier B."/>
            <person name="Delseny M."/>
            <person name="Boutry M."/>
            <person name="Grivell L.A."/>
            <person name="Mache R."/>
            <person name="Puigdomenech P."/>
            <person name="De Simone V."/>
            <person name="Choisne N."/>
            <person name="Artiguenave F."/>
            <person name="Robert C."/>
            <person name="Brottier P."/>
            <person name="Wincker P."/>
            <person name="Cattolico L."/>
            <person name="Weissenbach J."/>
            <person name="Saurin W."/>
            <person name="Quetier F."/>
            <person name="Schaefer M."/>
            <person name="Mueller-Auer S."/>
            <person name="Gabel C."/>
            <person name="Fuchs M."/>
            <person name="Benes V."/>
            <person name="Wurmbach E."/>
            <person name="Drzonek H."/>
            <person name="Erfle H."/>
            <person name="Jordan N."/>
            <person name="Bangert S."/>
            <person name="Wiedelmann R."/>
            <person name="Kranz H."/>
            <person name="Voss H."/>
            <person name="Holland R."/>
            <person name="Brandt P."/>
            <person name="Nyakatura G."/>
            <person name="Vezzi A."/>
            <person name="D'Angelo M."/>
            <person name="Pallavicini A."/>
            <person name="Toppo S."/>
            <person name="Simionati B."/>
            <person name="Conrad A."/>
            <person name="Hornischer K."/>
            <person name="Kauer G."/>
            <person name="Loehnert T.-H."/>
            <person name="Nordsiek G."/>
            <person name="Reichelt J."/>
            <person name="Scharfe M."/>
            <person name="Schoen O."/>
            <person name="Bargues M."/>
            <person name="Terol J."/>
            <person name="Climent J."/>
            <person name="Navarro P."/>
            <person name="Collado C."/>
            <person name="Perez-Perez A."/>
            <person name="Ottenwaelder B."/>
            <person name="Duchemin D."/>
            <person name="Cooke R."/>
            <person name="Laudie M."/>
            <person name="Berger-Llauro C."/>
            <person name="Purnelle B."/>
            <person name="Masuy D."/>
            <person name="de Haan M."/>
            <person name="Maarse A.C."/>
            <person name="Alcaraz J.-P."/>
            <person name="Cottet A."/>
            <person name="Casacuberta E."/>
            <person name="Monfort A."/>
            <person name="Argiriou A."/>
            <person name="Flores M."/>
            <person name="Liguori R."/>
            <person name="Vitale D."/>
            <person name="Mannhaupt G."/>
            <person name="Haase D."/>
            <person name="Schoof H."/>
            <person name="Rudd S."/>
            <person name="Zaccaria P."/>
            <person name="Mewes H.-W."/>
            <person name="Mayer K.F.X."/>
            <person name="Kaul S."/>
            <person name="Town C.D."/>
            <person name="Koo H.L."/>
            <person name="Tallon L.J."/>
            <person name="Jenkins J."/>
            <person name="Rooney T."/>
            <person name="Rizzo M."/>
            <person name="Walts A."/>
            <person name="Utterback T."/>
            <person name="Fujii C.Y."/>
            <person name="Shea T.P."/>
            <person name="Creasy T.H."/>
            <person name="Haas B."/>
            <person name="Maiti R."/>
            <person name="Wu D."/>
            <person name="Peterson J."/>
            <person name="Van Aken S."/>
            <person name="Pai G."/>
            <person name="Militscher J."/>
            <person name="Sellers P."/>
            <person name="Gill J.E."/>
            <person name="Feldblyum T.V."/>
            <person name="Preuss D."/>
            <person name="Lin X."/>
            <person name="Nierman W.C."/>
            <person name="Salzberg S.L."/>
            <person name="White O."/>
            <person name="Venter J.C."/>
            <person name="Fraser C.M."/>
            <person name="Kaneko T."/>
            <person name="Nakamura Y."/>
            <person name="Sato S."/>
            <person name="Kato T."/>
            <person name="Asamizu E."/>
            <person name="Sasamoto S."/>
            <person name="Kimura T."/>
            <person name="Idesawa K."/>
            <person name="Kawashima K."/>
            <person name="Kishida Y."/>
            <person name="Kiyokawa C."/>
            <person name="Kohara M."/>
            <person name="Matsumoto M."/>
            <person name="Matsuno A."/>
            <person name="Muraki A."/>
            <person name="Nakayama S."/>
            <person name="Nakazaki N."/>
            <person name="Shinpo S."/>
            <person name="Takeuchi C."/>
            <person name="Wada T."/>
            <person name="Watanabe A."/>
            <person name="Yamada M."/>
            <person name="Yasuda M."/>
            <person name="Tabata S."/>
        </authorList>
    </citation>
    <scope>NUCLEOTIDE SEQUENCE [LARGE SCALE GENOMIC DNA]</scope>
    <source>
        <strain>cv. Columbia</strain>
    </source>
</reference>
<reference key="3">
    <citation type="journal article" date="2017" name="Plant J.">
        <title>Araport11: a complete reannotation of the Arabidopsis thaliana reference genome.</title>
        <authorList>
            <person name="Cheng C.Y."/>
            <person name="Krishnakumar V."/>
            <person name="Chan A.P."/>
            <person name="Thibaud-Nissen F."/>
            <person name="Schobel S."/>
            <person name="Town C.D."/>
        </authorList>
    </citation>
    <scope>GENOME REANNOTATION</scope>
    <source>
        <strain>cv. Columbia</strain>
    </source>
</reference>
<reference key="4">
    <citation type="journal article" date="2003" name="Science">
        <title>Empirical analysis of transcriptional activity in the Arabidopsis genome.</title>
        <authorList>
            <person name="Yamada K."/>
            <person name="Lim J."/>
            <person name="Dale J.M."/>
            <person name="Chen H."/>
            <person name="Shinn P."/>
            <person name="Palm C.J."/>
            <person name="Southwick A.M."/>
            <person name="Wu H.C."/>
            <person name="Kim C.J."/>
            <person name="Nguyen M."/>
            <person name="Pham P.K."/>
            <person name="Cheuk R.F."/>
            <person name="Karlin-Newmann G."/>
            <person name="Liu S.X."/>
            <person name="Lam B."/>
            <person name="Sakano H."/>
            <person name="Wu T."/>
            <person name="Yu G."/>
            <person name="Miranda M."/>
            <person name="Quach H.L."/>
            <person name="Tripp M."/>
            <person name="Chang C.H."/>
            <person name="Lee J.M."/>
            <person name="Toriumi M.J."/>
            <person name="Chan M.M."/>
            <person name="Tang C.C."/>
            <person name="Onodera C.S."/>
            <person name="Deng J.M."/>
            <person name="Akiyama K."/>
            <person name="Ansari Y."/>
            <person name="Arakawa T."/>
            <person name="Banh J."/>
            <person name="Banno F."/>
            <person name="Bowser L."/>
            <person name="Brooks S.Y."/>
            <person name="Carninci P."/>
            <person name="Chao Q."/>
            <person name="Choy N."/>
            <person name="Enju A."/>
            <person name="Goldsmith A.D."/>
            <person name="Gurjal M."/>
            <person name="Hansen N.F."/>
            <person name="Hayashizaki Y."/>
            <person name="Johnson-Hopson C."/>
            <person name="Hsuan V.W."/>
            <person name="Iida K."/>
            <person name="Karnes M."/>
            <person name="Khan S."/>
            <person name="Koesema E."/>
            <person name="Ishida J."/>
            <person name="Jiang P.X."/>
            <person name="Jones T."/>
            <person name="Kawai J."/>
            <person name="Kamiya A."/>
            <person name="Meyers C."/>
            <person name="Nakajima M."/>
            <person name="Narusaka M."/>
            <person name="Seki M."/>
            <person name="Sakurai T."/>
            <person name="Satou M."/>
            <person name="Tamse R."/>
            <person name="Vaysberg M."/>
            <person name="Wallender E.K."/>
            <person name="Wong C."/>
            <person name="Yamamura Y."/>
            <person name="Yuan S."/>
            <person name="Shinozaki K."/>
            <person name="Davis R.W."/>
            <person name="Theologis A."/>
            <person name="Ecker J.R."/>
        </authorList>
    </citation>
    <scope>NUCLEOTIDE SEQUENCE [LARGE SCALE MRNA] OF 27-637 AND 83-637 (ISOFORM 1)</scope>
    <source>
        <strain>cv. Columbia</strain>
    </source>
</reference>
<reference key="5">
    <citation type="journal article" date="2009" name="DNA Res.">
        <title>Analysis of multiple occurrences of alternative splicing events in Arabidopsis thaliana using novel sequenced full-length cDNAs.</title>
        <authorList>
            <person name="Iida K."/>
            <person name="Fukami-Kobayashi K."/>
            <person name="Toyoda A."/>
            <person name="Sakaki Y."/>
            <person name="Kobayashi M."/>
            <person name="Seki M."/>
            <person name="Shinozaki K."/>
        </authorList>
    </citation>
    <scope>NUCLEOTIDE SEQUENCE [LARGE SCALE MRNA] (ISOFORM 2)</scope>
    <source>
        <strain>cv. Columbia</strain>
    </source>
</reference>
<reference key="6">
    <citation type="journal article" date="2003" name="Planta">
        <title>Arabidopsis glucosyltransferases with activities toward both endogenous and xenobiotic substrates.</title>
        <authorList>
            <person name="Messner B."/>
            <person name="Thulke O."/>
            <person name="Schaeffner A.R."/>
        </authorList>
    </citation>
    <scope>TISSUE SPECIFICITY</scope>
</reference>
<reference key="7">
    <citation type="journal article" date="2009" name="Plant Physiol.">
        <title>Large-scale Arabidopsis phosphoproteome profiling reveals novel chloroplast kinase substrates and phosphorylation networks.</title>
        <authorList>
            <person name="Reiland S."/>
            <person name="Messerli G."/>
            <person name="Baerenfaller K."/>
            <person name="Gerrits B."/>
            <person name="Endler A."/>
            <person name="Grossmann J."/>
            <person name="Gruissem W."/>
            <person name="Baginsky S."/>
        </authorList>
    </citation>
    <scope>IDENTIFICATION BY MASS SPECTROMETRY [LARGE SCALE ANALYSIS]</scope>
</reference>
<reference key="8">
    <citation type="journal article" date="2009" name="Plant Physiol.">
        <title>Mutations in UDP-Glucose:sterol glucosyltransferase in Arabidopsis cause transparent testa phenotype and suberization defect in seeds.</title>
        <authorList>
            <person name="DeBolt S."/>
            <person name="Scheible W.R."/>
            <person name="Schrick K."/>
            <person name="Auer M."/>
            <person name="Beisson F."/>
            <person name="Bischoff V."/>
            <person name="Bouvier-Nave P."/>
            <person name="Carroll A."/>
            <person name="Hematy K."/>
            <person name="Li Y."/>
            <person name="Milne J."/>
            <person name="Nair M."/>
            <person name="Schaller H."/>
            <person name="Zemla M."/>
            <person name="Somerville C."/>
        </authorList>
    </citation>
    <scope>FUNCTION</scope>
    <scope>TISSUE SPECIFICITY</scope>
    <scope>DISRUPTION PHENOTYPE</scope>
</reference>
<reference key="9">
    <citation type="journal article" date="2012" name="Lipids">
        <title>Steryl glucoside and acyl steryl glucoside analysis of Arabidopsis seeds by electrospray ionization tandem mass spectrometry.</title>
        <authorList>
            <person name="Schrick K."/>
            <person name="Shiva S."/>
            <person name="Arpin J.C."/>
            <person name="Delimont N."/>
            <person name="Isaac G."/>
            <person name="Tamura P."/>
            <person name="Welti R."/>
        </authorList>
    </citation>
    <scope>FUNCTION</scope>
</reference>
<name>U80A2_ARATH</name>